<comment type="function">
    <text evidence="1 2 3">Monooxygenase; part of the gene cluster that mediates the biosynthesis of the tetrahydroxanthone dimer neosartorin, which exhibits antibacterial activity (PubMed:30394754, PubMed:32105084, PubMed:33891392). The two different monomeric units appear to be synthesized by the same set of enzymes, among which the Baeyer-Villiger monooxygenase nsrF is the key enzyme for the divergence of the biosynthetic routes (PubMed:32105084). The pathway begins with the synthesis of atrochrysone thioester by the polyketide synthase nsrB (PubMed:32105084). The atrochrysone carboxyl ACP thioesterase nsrC then breaks the thioester bond and releases the atrochrysone carboxylic acid from AacuL (PubMed:32105084). Atrochrysone carboxylic acid is decarboxylated by the decarboxylase nsrE, and oxidized by the anthrone oxygenase nsrD to yield emodin (PubMed:32105084). Emodin is then reduced to emodin hydroquinone by the oxidoreductase nsrR (PubMed:32105084). A-ring reduction by the short chain dehydrogenase nsrJ, dehydration by the scytalone dehydratase-like protein nsrI and probable spontaneous re-oxidation, results in overall deoxygenation to chrysophanol (PubMed:32105084). The Baeyer-Villiger monooxygenase nsrF accepts chrysophanol as a substrate to insert one oxygen atom at two different positions to yield the precursors of both monomric units (PubMed:30394754, PubMed:32105084, PubMed:33891392). NsrF is promiscuous/flexible in interacting with the 2 (non methylated and methylated) aromatic rings of chrysophanol, thus diverging the biosynthetic pathway at this point (PubMed:30394754, PubMed:32105084, PubMed:33891392). After the hydrolysis of the lactones, methylesterification by the methyltransferase nsrG yields respectively moniliphenone and 2,2',6'-trihydroxy-4-methyl-6-methoxya-cyldiphenylmethanone (PubMed:30394754, PubMed:32105084). The next steps are the hydroxylation by the FAD-dependent monooxygenase nsrK, followed by isomerization by the monooxygenase nsrQ (PubMed:32105084). The short chain dehydrogenase/reductase nsrO then catalyzes the C-5 ketoreduction to give the xanthone skeleton of blennolide C and 5-acetylblennolide A (PubMed:32105084). The acetyltransferase nsrL has a strict substrate specificity and uses only blennolide A but not blennolide C to yield 5-acetylblennolide A as the single-acetylated product (PubMed:30394754). In the final step of the biosynthesis, the heterodimerization of the 2 xanthones, blennolide C and 5-acetylblennolide A, is catalyzed by the cytochrome P450 monooxygenase nsrP (PubMed:30394754). NsrP can utilize at least three different xanthones as its substrates to perform the dimerization reaction (PubMed:30394754).</text>
</comment>
<comment type="pathway">
    <text evidence="6">Secondary metabolite biosynthesis.</text>
</comment>
<comment type="similarity">
    <text evidence="5">Belongs to the avfA family.</text>
</comment>
<feature type="chain" id="PRO_0000453493" description="Monooxygenase nsrS">
    <location>
        <begin position="1"/>
        <end position="150"/>
    </location>
</feature>
<reference key="1">
    <citation type="journal article" date="2018" name="Proc. Natl. Acad. Sci. U.S.A.">
        <title>Linking secondary metabolites to gene clusters through genome sequencing of six diverse Aspergillus species.</title>
        <authorList>
            <person name="Kjaerboelling I."/>
            <person name="Vesth T.C."/>
            <person name="Frisvad J.C."/>
            <person name="Nybo J.L."/>
            <person name="Theobald S."/>
            <person name="Kuo A."/>
            <person name="Bowyer P."/>
            <person name="Matsuda Y."/>
            <person name="Mondo S."/>
            <person name="Lyhne E.K."/>
            <person name="Kogle M.E."/>
            <person name="Clum A."/>
            <person name="Lipzen A."/>
            <person name="Salamov A."/>
            <person name="Ngan C.Y."/>
            <person name="Daum C."/>
            <person name="Chiniquy J."/>
            <person name="Barry K."/>
            <person name="LaButti K."/>
            <person name="Haridas S."/>
            <person name="Simmons B.A."/>
            <person name="Magnuson J.K."/>
            <person name="Mortensen U.H."/>
            <person name="Larsen T.O."/>
            <person name="Grigoriev I.V."/>
            <person name="Baker S.E."/>
            <person name="Andersen M.R."/>
        </authorList>
    </citation>
    <scope>NUCLEOTIDE SEQUENCE [LARGE SCALE GENOMIC DNA]</scope>
    <source>
        <strain>IBT 16806</strain>
    </source>
</reference>
<reference key="2">
    <citation type="journal article" date="2018" name="Org. Lett.">
        <title>Genetic characterization of neosartorin biosynthesis provides insight into heterodimeric natural product generation.</title>
        <authorList>
            <person name="Matsuda Y."/>
            <person name="Gotfredsen C.H."/>
            <person name="Larsen T.O."/>
        </authorList>
    </citation>
    <scope>FUNCTION</scope>
    <scope>PATHWAY</scope>
</reference>
<reference key="3">
    <citation type="journal article" date="2020" name="Org. Lett.">
        <title>Unraveling the fungal strategy for tetrahydroxanthone biosynthesis and diversification.</title>
        <authorList>
            <person name="Wei X."/>
            <person name="Matsuda Y."/>
        </authorList>
    </citation>
    <scope>FUNCTION</scope>
    <scope>PATHWAY</scope>
</reference>
<reference key="4">
    <citation type="journal article" date="2021" name="J. Nat. Prod.">
        <title>Heterologous biosynthesis of tetrahydroxanthone dimers: determination of key factors for selective or divergent synthesis.</title>
        <authorList>
            <person name="Wei X."/>
            <person name="Chen X."/>
            <person name="Chen L."/>
            <person name="Yan D."/>
            <person name="Wang W.G."/>
            <person name="Matsuda Y."/>
        </authorList>
    </citation>
    <scope>FUNCTION</scope>
</reference>
<evidence type="ECO:0000269" key="1">
    <source>
    </source>
</evidence>
<evidence type="ECO:0000269" key="2">
    <source>
    </source>
</evidence>
<evidence type="ECO:0000269" key="3">
    <source>
    </source>
</evidence>
<evidence type="ECO:0000303" key="4">
    <source>
    </source>
</evidence>
<evidence type="ECO:0000305" key="5"/>
<evidence type="ECO:0000305" key="6">
    <source>
    </source>
</evidence>
<gene>
    <name evidence="4" type="primary">nsrS</name>
    <name type="ORF">P174DRAFT_442171</name>
</gene>
<keyword id="KW-0503">Monooxygenase</keyword>
<keyword id="KW-0560">Oxidoreductase</keyword>
<keyword id="KW-1185">Reference proteome</keyword>
<sequence length="150" mass="16911">MPAPADIQAATLNKFLAAWREGSAPDTMALWSDDFKQRLLPLSLGESSFRSRDQAALFYPGLVENLRNWELHIKEIVHDSARGTAAVYATSQADTPFSGEKWTNEYAIFLSFSEDGTKVCRLEEMMDSAFYQSFVPKFQRYLMGLGGLKK</sequence>
<protein>
    <recommendedName>
        <fullName evidence="4">Monooxygenase nsrS</fullName>
        <ecNumber evidence="6">1.-.-.-</ecNumber>
    </recommendedName>
    <alternativeName>
        <fullName evidence="4">Neosartorin biosynthesis cluster protein S</fullName>
    </alternativeName>
</protein>
<organism>
    <name type="scientific">Aspergillus novofumigatus (strain IBT 16806)</name>
    <dbReference type="NCBI Taxonomy" id="1392255"/>
    <lineage>
        <taxon>Eukaryota</taxon>
        <taxon>Fungi</taxon>
        <taxon>Dikarya</taxon>
        <taxon>Ascomycota</taxon>
        <taxon>Pezizomycotina</taxon>
        <taxon>Eurotiomycetes</taxon>
        <taxon>Eurotiomycetidae</taxon>
        <taxon>Eurotiales</taxon>
        <taxon>Aspergillaceae</taxon>
        <taxon>Aspergillus</taxon>
        <taxon>Aspergillus subgen. Fumigati</taxon>
    </lineage>
</organism>
<accession>A0A2I1C3Y3</accession>
<name>NSRS_ASPN1</name>
<proteinExistence type="inferred from homology"/>
<dbReference type="EC" id="1.-.-.-" evidence="6"/>
<dbReference type="EMBL" id="MSZS01000005">
    <property type="protein sequence ID" value="PKX92291.1"/>
    <property type="molecule type" value="Genomic_DNA"/>
</dbReference>
<dbReference type="SMR" id="A0A2I1C3Y3"/>
<dbReference type="STRING" id="1392255.A0A2I1C3Y3"/>
<dbReference type="VEuPathDB" id="FungiDB:P174DRAFT_442171"/>
<dbReference type="OMA" id="WTNEYAI"/>
<dbReference type="OrthoDB" id="3758478at2759"/>
<dbReference type="Proteomes" id="UP000234474">
    <property type="component" value="Unassembled WGS sequence"/>
</dbReference>
<dbReference type="GO" id="GO:0004497">
    <property type="term" value="F:monooxygenase activity"/>
    <property type="evidence" value="ECO:0007669"/>
    <property type="project" value="UniProtKB-KW"/>
</dbReference>
<dbReference type="Gene3D" id="3.10.450.50">
    <property type="match status" value="1"/>
</dbReference>
<dbReference type="InterPro" id="IPR050977">
    <property type="entry name" value="Fungal_Meroterpenoid_Isomerase"/>
</dbReference>
<dbReference type="InterPro" id="IPR032710">
    <property type="entry name" value="NTF2-like_dom_sf"/>
</dbReference>
<dbReference type="InterPro" id="IPR037401">
    <property type="entry name" value="SnoaL-like"/>
</dbReference>
<dbReference type="PANTHER" id="PTHR39598:SF1">
    <property type="entry name" value="AUSTINOID BIOSYNTHESIS CLUSTERS PROTEIN F-RELATED"/>
    <property type="match status" value="1"/>
</dbReference>
<dbReference type="PANTHER" id="PTHR39598">
    <property type="entry name" value="AUSTINOL SYNTHESIS PROTEIN F-RELATED"/>
    <property type="match status" value="1"/>
</dbReference>
<dbReference type="Pfam" id="PF12680">
    <property type="entry name" value="SnoaL_2"/>
    <property type="match status" value="1"/>
</dbReference>
<dbReference type="SUPFAM" id="SSF54427">
    <property type="entry name" value="NTF2-like"/>
    <property type="match status" value="1"/>
</dbReference>